<feature type="chain" id="PRO_1000019583" description="Exodeoxyribonuclease 7 small subunit">
    <location>
        <begin position="1"/>
        <end position="84"/>
    </location>
</feature>
<dbReference type="EC" id="3.1.11.6" evidence="1"/>
<dbReference type="EMBL" id="CP000269">
    <property type="protein sequence ID" value="ABR91684.1"/>
    <property type="molecule type" value="Genomic_DNA"/>
</dbReference>
<dbReference type="RefSeq" id="WP_012078194.1">
    <property type="nucleotide sequence ID" value="NC_009659.1"/>
</dbReference>
<dbReference type="SMR" id="A6SUS2"/>
<dbReference type="STRING" id="375286.mma_0329"/>
<dbReference type="KEGG" id="mms:mma_0329"/>
<dbReference type="eggNOG" id="COG1722">
    <property type="taxonomic scope" value="Bacteria"/>
</dbReference>
<dbReference type="HOGENOM" id="CLU_145918_2_0_4"/>
<dbReference type="OrthoDB" id="287668at2"/>
<dbReference type="Proteomes" id="UP000006388">
    <property type="component" value="Chromosome"/>
</dbReference>
<dbReference type="GO" id="GO:0005829">
    <property type="term" value="C:cytosol"/>
    <property type="evidence" value="ECO:0007669"/>
    <property type="project" value="TreeGrafter"/>
</dbReference>
<dbReference type="GO" id="GO:0009318">
    <property type="term" value="C:exodeoxyribonuclease VII complex"/>
    <property type="evidence" value="ECO:0007669"/>
    <property type="project" value="InterPro"/>
</dbReference>
<dbReference type="GO" id="GO:0008855">
    <property type="term" value="F:exodeoxyribonuclease VII activity"/>
    <property type="evidence" value="ECO:0007669"/>
    <property type="project" value="UniProtKB-UniRule"/>
</dbReference>
<dbReference type="GO" id="GO:0006308">
    <property type="term" value="P:DNA catabolic process"/>
    <property type="evidence" value="ECO:0007669"/>
    <property type="project" value="UniProtKB-UniRule"/>
</dbReference>
<dbReference type="Gene3D" id="1.10.287.1040">
    <property type="entry name" value="Exonuclease VII, small subunit"/>
    <property type="match status" value="1"/>
</dbReference>
<dbReference type="HAMAP" id="MF_00337">
    <property type="entry name" value="Exonuc_7_S"/>
    <property type="match status" value="1"/>
</dbReference>
<dbReference type="InterPro" id="IPR003761">
    <property type="entry name" value="Exonuc_VII_S"/>
</dbReference>
<dbReference type="InterPro" id="IPR037004">
    <property type="entry name" value="Exonuc_VII_ssu_sf"/>
</dbReference>
<dbReference type="NCBIfam" id="NF002141">
    <property type="entry name" value="PRK00977.1-5"/>
    <property type="match status" value="1"/>
</dbReference>
<dbReference type="NCBIfam" id="TIGR01280">
    <property type="entry name" value="xseB"/>
    <property type="match status" value="1"/>
</dbReference>
<dbReference type="PANTHER" id="PTHR34137">
    <property type="entry name" value="EXODEOXYRIBONUCLEASE 7 SMALL SUBUNIT"/>
    <property type="match status" value="1"/>
</dbReference>
<dbReference type="PANTHER" id="PTHR34137:SF1">
    <property type="entry name" value="EXODEOXYRIBONUCLEASE 7 SMALL SUBUNIT"/>
    <property type="match status" value="1"/>
</dbReference>
<dbReference type="Pfam" id="PF02609">
    <property type="entry name" value="Exonuc_VII_S"/>
    <property type="match status" value="1"/>
</dbReference>
<dbReference type="PIRSF" id="PIRSF006488">
    <property type="entry name" value="Exonuc_VII_S"/>
    <property type="match status" value="1"/>
</dbReference>
<dbReference type="SUPFAM" id="SSF116842">
    <property type="entry name" value="XseB-like"/>
    <property type="match status" value="1"/>
</dbReference>
<accession>A6SUS2</accession>
<sequence>MSKKSTSAALPSSFEEAMAELEQLVARMEAGELPLEASVAAYKRGSELVKYCAAQLEKVDNQVKVLEGDMLKPFNADRAIEADE</sequence>
<protein>
    <recommendedName>
        <fullName evidence="1">Exodeoxyribonuclease 7 small subunit</fullName>
        <ecNumber evidence="1">3.1.11.6</ecNumber>
    </recommendedName>
    <alternativeName>
        <fullName evidence="1">Exodeoxyribonuclease VII small subunit</fullName>
        <shortName evidence="1">Exonuclease VII small subunit</shortName>
    </alternativeName>
</protein>
<organism>
    <name type="scientific">Janthinobacterium sp. (strain Marseille)</name>
    <name type="common">Minibacterium massiliensis</name>
    <dbReference type="NCBI Taxonomy" id="375286"/>
    <lineage>
        <taxon>Bacteria</taxon>
        <taxon>Pseudomonadati</taxon>
        <taxon>Pseudomonadota</taxon>
        <taxon>Betaproteobacteria</taxon>
        <taxon>Burkholderiales</taxon>
        <taxon>Oxalobacteraceae</taxon>
        <taxon>Janthinobacterium</taxon>
    </lineage>
</organism>
<name>EX7S_JANMA</name>
<reference key="1">
    <citation type="journal article" date="2007" name="PLoS Genet.">
        <title>Genome analysis of Minibacterium massiliensis highlights the convergent evolution of water-living bacteria.</title>
        <authorList>
            <person name="Audic S."/>
            <person name="Robert C."/>
            <person name="Campagna B."/>
            <person name="Parinello H."/>
            <person name="Claverie J.-M."/>
            <person name="Raoult D."/>
            <person name="Drancourt M."/>
        </authorList>
    </citation>
    <scope>NUCLEOTIDE SEQUENCE [LARGE SCALE GENOMIC DNA]</scope>
    <source>
        <strain>Marseille</strain>
    </source>
</reference>
<comment type="function">
    <text evidence="1">Bidirectionally degrades single-stranded DNA into large acid-insoluble oligonucleotides, which are then degraded further into small acid-soluble oligonucleotides.</text>
</comment>
<comment type="catalytic activity">
    <reaction evidence="1">
        <text>Exonucleolytic cleavage in either 5'- to 3'- or 3'- to 5'-direction to yield nucleoside 5'-phosphates.</text>
        <dbReference type="EC" id="3.1.11.6"/>
    </reaction>
</comment>
<comment type="subunit">
    <text evidence="1">Heterooligomer composed of large and small subunits.</text>
</comment>
<comment type="subcellular location">
    <subcellularLocation>
        <location evidence="1">Cytoplasm</location>
    </subcellularLocation>
</comment>
<comment type="similarity">
    <text evidence="1">Belongs to the XseB family.</text>
</comment>
<keyword id="KW-0963">Cytoplasm</keyword>
<keyword id="KW-0269">Exonuclease</keyword>
<keyword id="KW-0378">Hydrolase</keyword>
<keyword id="KW-0540">Nuclease</keyword>
<evidence type="ECO:0000255" key="1">
    <source>
        <dbReference type="HAMAP-Rule" id="MF_00337"/>
    </source>
</evidence>
<gene>
    <name evidence="1" type="primary">xseB</name>
    <name type="ordered locus">mma_0329</name>
</gene>
<proteinExistence type="inferred from homology"/>